<comment type="catalytic activity">
    <reaction evidence="1">
        <text>alpha-D-xylose = alpha-D-xylulofuranose</text>
        <dbReference type="Rhea" id="RHEA:22816"/>
        <dbReference type="ChEBI" id="CHEBI:28518"/>
        <dbReference type="ChEBI" id="CHEBI:188998"/>
        <dbReference type="EC" id="5.3.1.5"/>
    </reaction>
</comment>
<comment type="cofactor">
    <cofactor evidence="1">
        <name>Mg(2+)</name>
        <dbReference type="ChEBI" id="CHEBI:18420"/>
    </cofactor>
    <text evidence="1">Binds 2 magnesium ions per subunit.</text>
</comment>
<comment type="subunit">
    <text evidence="1">Homotetramer.</text>
</comment>
<comment type="subcellular location">
    <subcellularLocation>
        <location evidence="1">Cytoplasm</location>
    </subcellularLocation>
</comment>
<comment type="similarity">
    <text evidence="1">Belongs to the xylose isomerase family.</text>
</comment>
<proteinExistence type="inferred from homology"/>
<reference key="1">
    <citation type="submission" date="2006-01" db="EMBL/GenBank/DDBJ databases">
        <title>Complete sequence of Novosphingobium aromaticivorans DSM 12444.</title>
        <authorList>
            <consortium name="US DOE Joint Genome Institute"/>
            <person name="Copeland A."/>
            <person name="Lucas S."/>
            <person name="Lapidus A."/>
            <person name="Barry K."/>
            <person name="Detter J.C."/>
            <person name="Glavina T."/>
            <person name="Hammon N."/>
            <person name="Israni S."/>
            <person name="Pitluck S."/>
            <person name="Chain P."/>
            <person name="Malfatti S."/>
            <person name="Shin M."/>
            <person name="Vergez L."/>
            <person name="Schmutz J."/>
            <person name="Larimer F."/>
            <person name="Land M."/>
            <person name="Kyrpides N."/>
            <person name="Ivanova N."/>
            <person name="Fredrickson J."/>
            <person name="Balkwill D."/>
            <person name="Romine M.F."/>
            <person name="Richardson P."/>
        </authorList>
    </citation>
    <scope>NUCLEOTIDE SEQUENCE [LARGE SCALE GENOMIC DNA]</scope>
    <source>
        <strain>ATCC 700278 / DSM 12444 / CCUG 56034 / CIP 105152 / NBRC 16084 / F199</strain>
    </source>
</reference>
<evidence type="ECO:0000255" key="1">
    <source>
        <dbReference type="HAMAP-Rule" id="MF_00455"/>
    </source>
</evidence>
<feature type="chain" id="PRO_0000236965" description="Xylose isomerase">
    <location>
        <begin position="1"/>
        <end position="437"/>
    </location>
</feature>
<feature type="active site" evidence="1">
    <location>
        <position position="102"/>
    </location>
</feature>
<feature type="active site" evidence="1">
    <location>
        <position position="105"/>
    </location>
</feature>
<feature type="binding site" evidence="1">
    <location>
        <position position="233"/>
    </location>
    <ligand>
        <name>Mg(2+)</name>
        <dbReference type="ChEBI" id="CHEBI:18420"/>
        <label>1</label>
    </ligand>
</feature>
<feature type="binding site" evidence="1">
    <location>
        <position position="269"/>
    </location>
    <ligand>
        <name>Mg(2+)</name>
        <dbReference type="ChEBI" id="CHEBI:18420"/>
        <label>1</label>
    </ligand>
</feature>
<feature type="binding site" evidence="1">
    <location>
        <position position="269"/>
    </location>
    <ligand>
        <name>Mg(2+)</name>
        <dbReference type="ChEBI" id="CHEBI:18420"/>
        <label>2</label>
    </ligand>
</feature>
<feature type="binding site" evidence="1">
    <location>
        <position position="272"/>
    </location>
    <ligand>
        <name>Mg(2+)</name>
        <dbReference type="ChEBI" id="CHEBI:18420"/>
        <label>2</label>
    </ligand>
</feature>
<feature type="binding site" evidence="1">
    <location>
        <position position="297"/>
    </location>
    <ligand>
        <name>Mg(2+)</name>
        <dbReference type="ChEBI" id="CHEBI:18420"/>
        <label>1</label>
    </ligand>
</feature>
<feature type="binding site" evidence="1">
    <location>
        <position position="308"/>
    </location>
    <ligand>
        <name>Mg(2+)</name>
        <dbReference type="ChEBI" id="CHEBI:18420"/>
        <label>2</label>
    </ligand>
</feature>
<feature type="binding site" evidence="1">
    <location>
        <position position="310"/>
    </location>
    <ligand>
        <name>Mg(2+)</name>
        <dbReference type="ChEBI" id="CHEBI:18420"/>
        <label>2</label>
    </ligand>
</feature>
<feature type="binding site" evidence="1">
    <location>
        <position position="340"/>
    </location>
    <ligand>
        <name>Mg(2+)</name>
        <dbReference type="ChEBI" id="CHEBI:18420"/>
        <label>1</label>
    </ligand>
</feature>
<organism>
    <name type="scientific">Novosphingobium aromaticivorans (strain ATCC 700278 / DSM 12444 / CCUG 56034 / CIP 105152 / NBRC 16084 / F199)</name>
    <dbReference type="NCBI Taxonomy" id="279238"/>
    <lineage>
        <taxon>Bacteria</taxon>
        <taxon>Pseudomonadati</taxon>
        <taxon>Pseudomonadota</taxon>
        <taxon>Alphaproteobacteria</taxon>
        <taxon>Sphingomonadales</taxon>
        <taxon>Sphingomonadaceae</taxon>
        <taxon>Novosphingobium</taxon>
    </lineage>
</organism>
<protein>
    <recommendedName>
        <fullName evidence="1">Xylose isomerase</fullName>
        <ecNumber evidence="1">5.3.1.5</ecNumber>
    </recommendedName>
</protein>
<accession>Q2GAB9</accession>
<dbReference type="EC" id="5.3.1.5" evidence="1"/>
<dbReference type="EMBL" id="CP000248">
    <property type="protein sequence ID" value="ABD25204.1"/>
    <property type="molecule type" value="Genomic_DNA"/>
</dbReference>
<dbReference type="RefSeq" id="WP_011444418.1">
    <property type="nucleotide sequence ID" value="NC_007794.1"/>
</dbReference>
<dbReference type="SMR" id="Q2GAB9"/>
<dbReference type="STRING" id="279238.Saro_0757"/>
<dbReference type="KEGG" id="nar:Saro_0757"/>
<dbReference type="eggNOG" id="COG2115">
    <property type="taxonomic scope" value="Bacteria"/>
</dbReference>
<dbReference type="HOGENOM" id="CLU_037261_1_0_5"/>
<dbReference type="Proteomes" id="UP000009134">
    <property type="component" value="Chromosome"/>
</dbReference>
<dbReference type="GO" id="GO:0005737">
    <property type="term" value="C:cytoplasm"/>
    <property type="evidence" value="ECO:0007669"/>
    <property type="project" value="UniProtKB-SubCell"/>
</dbReference>
<dbReference type="GO" id="GO:0000287">
    <property type="term" value="F:magnesium ion binding"/>
    <property type="evidence" value="ECO:0007669"/>
    <property type="project" value="UniProtKB-UniRule"/>
</dbReference>
<dbReference type="GO" id="GO:0009045">
    <property type="term" value="F:xylose isomerase activity"/>
    <property type="evidence" value="ECO:0007669"/>
    <property type="project" value="UniProtKB-UniRule"/>
</dbReference>
<dbReference type="GO" id="GO:0042732">
    <property type="term" value="P:D-xylose metabolic process"/>
    <property type="evidence" value="ECO:0007669"/>
    <property type="project" value="UniProtKB-UniRule"/>
</dbReference>
<dbReference type="Gene3D" id="3.20.20.150">
    <property type="entry name" value="Divalent-metal-dependent TIM barrel enzymes"/>
    <property type="match status" value="1"/>
</dbReference>
<dbReference type="HAMAP" id="MF_00455">
    <property type="entry name" value="Xylose_isom_A"/>
    <property type="match status" value="1"/>
</dbReference>
<dbReference type="InterPro" id="IPR036237">
    <property type="entry name" value="Xyl_isomerase-like_sf"/>
</dbReference>
<dbReference type="InterPro" id="IPR013452">
    <property type="entry name" value="Xylose_isom_bac"/>
</dbReference>
<dbReference type="InterPro" id="IPR001998">
    <property type="entry name" value="Xylose_isomerase"/>
</dbReference>
<dbReference type="NCBIfam" id="NF003998">
    <property type="entry name" value="PRK05474.1"/>
    <property type="match status" value="1"/>
</dbReference>
<dbReference type="NCBIfam" id="TIGR02630">
    <property type="entry name" value="xylose_isom_A"/>
    <property type="match status" value="1"/>
</dbReference>
<dbReference type="PANTHER" id="PTHR48408">
    <property type="match status" value="1"/>
</dbReference>
<dbReference type="PANTHER" id="PTHR48408:SF1">
    <property type="entry name" value="XYLOSE ISOMERASE"/>
    <property type="match status" value="1"/>
</dbReference>
<dbReference type="PRINTS" id="PR00688">
    <property type="entry name" value="XYLOSISMRASE"/>
</dbReference>
<dbReference type="SUPFAM" id="SSF51658">
    <property type="entry name" value="Xylose isomerase-like"/>
    <property type="match status" value="1"/>
</dbReference>
<dbReference type="PROSITE" id="PS51415">
    <property type="entry name" value="XYLOSE_ISOMERASE"/>
    <property type="match status" value="1"/>
</dbReference>
<keyword id="KW-0119">Carbohydrate metabolism</keyword>
<keyword id="KW-0963">Cytoplasm</keyword>
<keyword id="KW-0413">Isomerase</keyword>
<keyword id="KW-0460">Magnesium</keyword>
<keyword id="KW-0479">Metal-binding</keyword>
<keyword id="KW-1185">Reference proteome</keyword>
<keyword id="KW-0859">Xylose metabolism</keyword>
<sequence>MSADYFADFQTVRYEGPDSDNDFAYRWYDKDRVILGKRMEDHLRFAVCMWHTFCWPGSDVFGAGTFTRPWLQGPMDARNAAAKREAALAFVEKLDVPFYCFHDVDVMAEAEGIGEFRSSFAEAVDHLEELQGKHGRKLLWGTANLFGHPRYMAGAATNPDPEVFAWGASQVRDALEATHRLGGANYVLWGGREGYDSILNTEIGIEQENFGRFLSLVVDHKHRIGFKGTILIEPKPHEPTKHQYDFDTQTVFGFLKRFGLESEVKVNIEANHATLSGHTFEHELAMARALGILGSIDANRGDHQNGWDTDQFPNSVEELTLAMLELIRAGGFTDGGFNFDAKVRRQSIDAADLFHGHIGGIDTIAHALVKAAALIEDGKLDAFRAERYAGWQGELGRKIHADGTTLADIADIAVARDLAPVRRSGRQEWCENLINRV</sequence>
<name>XYLA_NOVAD</name>
<gene>
    <name evidence="1" type="primary">xylA</name>
    <name type="ordered locus">Saro_0757</name>
</gene>